<comment type="function">
    <text evidence="2">With S4 and S5 plays an important role in translational accuracy.</text>
</comment>
<comment type="function">
    <text evidence="2">Interacts with and stabilizes bases of the 16S rRNA that are involved in tRNA selection in the A site and with the mRNA backbone. Located at the interface of the 30S and 50S subunits, it traverses the body of the 30S subunit contacting proteins on the other side and probably holding the rRNA structure together. The combined cluster of proteins S8, S12 and S17 appears to hold together the shoulder and platform of the 30S subunit.</text>
</comment>
<comment type="subunit">
    <text evidence="2">Part of the 30S ribosomal subunit. Contacts proteins S8 and S17. May interact with IF1 in the 30S initiation complex.</text>
</comment>
<comment type="similarity">
    <text evidence="2">Belongs to the universal ribosomal protein uS12 family.</text>
</comment>
<feature type="chain" id="PRO_1000205928" description="Small ribosomal subunit protein uS12">
    <location>
        <begin position="1"/>
        <end position="123"/>
    </location>
</feature>
<feature type="region of interest" description="Disordered" evidence="3">
    <location>
        <begin position="1"/>
        <end position="22"/>
    </location>
</feature>
<feature type="region of interest" description="Disordered" evidence="3">
    <location>
        <begin position="101"/>
        <end position="123"/>
    </location>
</feature>
<feature type="compositionally biased region" description="Basic residues" evidence="3">
    <location>
        <begin position="111"/>
        <end position="123"/>
    </location>
</feature>
<feature type="modified residue" description="3-methylthioaspartic acid" evidence="1">
    <location>
        <position position="89"/>
    </location>
</feature>
<dbReference type="EMBL" id="CP001614">
    <property type="protein sequence ID" value="ACR12608.1"/>
    <property type="molecule type" value="Genomic_DNA"/>
</dbReference>
<dbReference type="RefSeq" id="WP_015818720.1">
    <property type="nucleotide sequence ID" value="NC_012997.1"/>
</dbReference>
<dbReference type="SMR" id="C5BQ41"/>
<dbReference type="STRING" id="377629.TERTU_0886"/>
<dbReference type="GeneID" id="58408662"/>
<dbReference type="GeneID" id="93857763"/>
<dbReference type="KEGG" id="ttu:TERTU_0886"/>
<dbReference type="eggNOG" id="COG0048">
    <property type="taxonomic scope" value="Bacteria"/>
</dbReference>
<dbReference type="HOGENOM" id="CLU_104295_1_2_6"/>
<dbReference type="OrthoDB" id="9802366at2"/>
<dbReference type="Proteomes" id="UP000009080">
    <property type="component" value="Chromosome"/>
</dbReference>
<dbReference type="GO" id="GO:0015935">
    <property type="term" value="C:small ribosomal subunit"/>
    <property type="evidence" value="ECO:0007669"/>
    <property type="project" value="InterPro"/>
</dbReference>
<dbReference type="GO" id="GO:0019843">
    <property type="term" value="F:rRNA binding"/>
    <property type="evidence" value="ECO:0007669"/>
    <property type="project" value="UniProtKB-UniRule"/>
</dbReference>
<dbReference type="GO" id="GO:0003735">
    <property type="term" value="F:structural constituent of ribosome"/>
    <property type="evidence" value="ECO:0007669"/>
    <property type="project" value="InterPro"/>
</dbReference>
<dbReference type="GO" id="GO:0000049">
    <property type="term" value="F:tRNA binding"/>
    <property type="evidence" value="ECO:0007669"/>
    <property type="project" value="UniProtKB-UniRule"/>
</dbReference>
<dbReference type="GO" id="GO:0006412">
    <property type="term" value="P:translation"/>
    <property type="evidence" value="ECO:0007669"/>
    <property type="project" value="UniProtKB-UniRule"/>
</dbReference>
<dbReference type="CDD" id="cd03368">
    <property type="entry name" value="Ribosomal_S12"/>
    <property type="match status" value="1"/>
</dbReference>
<dbReference type="FunFam" id="2.40.50.140:FF:000001">
    <property type="entry name" value="30S ribosomal protein S12"/>
    <property type="match status" value="1"/>
</dbReference>
<dbReference type="Gene3D" id="2.40.50.140">
    <property type="entry name" value="Nucleic acid-binding proteins"/>
    <property type="match status" value="1"/>
</dbReference>
<dbReference type="HAMAP" id="MF_00403_B">
    <property type="entry name" value="Ribosomal_uS12_B"/>
    <property type="match status" value="1"/>
</dbReference>
<dbReference type="InterPro" id="IPR012340">
    <property type="entry name" value="NA-bd_OB-fold"/>
</dbReference>
<dbReference type="InterPro" id="IPR006032">
    <property type="entry name" value="Ribosomal_uS12"/>
</dbReference>
<dbReference type="InterPro" id="IPR005679">
    <property type="entry name" value="Ribosomal_uS12_bac"/>
</dbReference>
<dbReference type="NCBIfam" id="TIGR00981">
    <property type="entry name" value="rpsL_bact"/>
    <property type="match status" value="1"/>
</dbReference>
<dbReference type="PANTHER" id="PTHR11652">
    <property type="entry name" value="30S RIBOSOMAL PROTEIN S12 FAMILY MEMBER"/>
    <property type="match status" value="1"/>
</dbReference>
<dbReference type="Pfam" id="PF00164">
    <property type="entry name" value="Ribosom_S12_S23"/>
    <property type="match status" value="1"/>
</dbReference>
<dbReference type="PIRSF" id="PIRSF002133">
    <property type="entry name" value="Ribosomal_S12/S23"/>
    <property type="match status" value="1"/>
</dbReference>
<dbReference type="PRINTS" id="PR01034">
    <property type="entry name" value="RIBOSOMALS12"/>
</dbReference>
<dbReference type="SUPFAM" id="SSF50249">
    <property type="entry name" value="Nucleic acid-binding proteins"/>
    <property type="match status" value="1"/>
</dbReference>
<dbReference type="PROSITE" id="PS00055">
    <property type="entry name" value="RIBOSOMAL_S12"/>
    <property type="match status" value="1"/>
</dbReference>
<organism>
    <name type="scientific">Teredinibacter turnerae (strain ATCC 39867 / T7901)</name>
    <dbReference type="NCBI Taxonomy" id="377629"/>
    <lineage>
        <taxon>Bacteria</taxon>
        <taxon>Pseudomonadati</taxon>
        <taxon>Pseudomonadota</taxon>
        <taxon>Gammaproteobacteria</taxon>
        <taxon>Cellvibrionales</taxon>
        <taxon>Cellvibrionaceae</taxon>
        <taxon>Teredinibacter</taxon>
    </lineage>
</organism>
<keyword id="KW-0488">Methylation</keyword>
<keyword id="KW-1185">Reference proteome</keyword>
<keyword id="KW-0687">Ribonucleoprotein</keyword>
<keyword id="KW-0689">Ribosomal protein</keyword>
<keyword id="KW-0694">RNA-binding</keyword>
<keyword id="KW-0699">rRNA-binding</keyword>
<keyword id="KW-0820">tRNA-binding</keyword>
<reference key="1">
    <citation type="journal article" date="2009" name="PLoS ONE">
        <title>The complete genome of Teredinibacter turnerae T7901: an intracellular endosymbiont of marine wood-boring bivalves (shipworms).</title>
        <authorList>
            <person name="Yang J.C."/>
            <person name="Madupu R."/>
            <person name="Durkin A.S."/>
            <person name="Ekborg N.A."/>
            <person name="Pedamallu C.S."/>
            <person name="Hostetler J.B."/>
            <person name="Radune D."/>
            <person name="Toms B.S."/>
            <person name="Henrissat B."/>
            <person name="Coutinho P.M."/>
            <person name="Schwarz S."/>
            <person name="Field L."/>
            <person name="Trindade-Silva A.E."/>
            <person name="Soares C.A.G."/>
            <person name="Elshahawi S."/>
            <person name="Hanora A."/>
            <person name="Schmidt E.W."/>
            <person name="Haygood M.G."/>
            <person name="Posfai J."/>
            <person name="Benner J."/>
            <person name="Madinger C."/>
            <person name="Nove J."/>
            <person name="Anton B."/>
            <person name="Chaudhary K."/>
            <person name="Foster J."/>
            <person name="Holman A."/>
            <person name="Kumar S."/>
            <person name="Lessard P.A."/>
            <person name="Luyten Y.A."/>
            <person name="Slatko B."/>
            <person name="Wood N."/>
            <person name="Wu B."/>
            <person name="Teplitski M."/>
            <person name="Mougous J.D."/>
            <person name="Ward N."/>
            <person name="Eisen J.A."/>
            <person name="Badger J.H."/>
            <person name="Distel D.L."/>
        </authorList>
    </citation>
    <scope>NUCLEOTIDE SEQUENCE [LARGE SCALE GENOMIC DNA]</scope>
    <source>
        <strain>ATCC 39867 / T7901</strain>
    </source>
</reference>
<sequence>MATINQLVRKPRKRKAKTSDVRALEACPQRRGVCTRVYTTTPKKPNSALRKVCRVRLTNGFEVSSYIGGEGHNLQEHSVVLIRGGRVKDLPGVRYHTVRGALDTSGVNDRKRGRSKYGTKRPK</sequence>
<gene>
    <name evidence="2" type="primary">rpsL</name>
    <name type="ordered locus">TERTU_0886</name>
</gene>
<protein>
    <recommendedName>
        <fullName evidence="2">Small ribosomal subunit protein uS12</fullName>
    </recommendedName>
    <alternativeName>
        <fullName evidence="4">30S ribosomal protein S12</fullName>
    </alternativeName>
</protein>
<accession>C5BQ41</accession>
<evidence type="ECO:0000250" key="1"/>
<evidence type="ECO:0000255" key="2">
    <source>
        <dbReference type="HAMAP-Rule" id="MF_00403"/>
    </source>
</evidence>
<evidence type="ECO:0000256" key="3">
    <source>
        <dbReference type="SAM" id="MobiDB-lite"/>
    </source>
</evidence>
<evidence type="ECO:0000305" key="4"/>
<name>RS12_TERTT</name>
<proteinExistence type="inferred from homology"/>